<name>SYL_STAES</name>
<evidence type="ECO:0000255" key="1">
    <source>
        <dbReference type="HAMAP-Rule" id="MF_00049"/>
    </source>
</evidence>
<evidence type="ECO:0000305" key="2"/>
<comment type="catalytic activity">
    <reaction evidence="1">
        <text>tRNA(Leu) + L-leucine + ATP = L-leucyl-tRNA(Leu) + AMP + diphosphate</text>
        <dbReference type="Rhea" id="RHEA:11688"/>
        <dbReference type="Rhea" id="RHEA-COMP:9613"/>
        <dbReference type="Rhea" id="RHEA-COMP:9622"/>
        <dbReference type="ChEBI" id="CHEBI:30616"/>
        <dbReference type="ChEBI" id="CHEBI:33019"/>
        <dbReference type="ChEBI" id="CHEBI:57427"/>
        <dbReference type="ChEBI" id="CHEBI:78442"/>
        <dbReference type="ChEBI" id="CHEBI:78494"/>
        <dbReference type="ChEBI" id="CHEBI:456215"/>
        <dbReference type="EC" id="6.1.1.4"/>
    </reaction>
</comment>
<comment type="subcellular location">
    <subcellularLocation>
        <location evidence="1">Cytoplasm</location>
    </subcellularLocation>
</comment>
<comment type="similarity">
    <text evidence="1">Belongs to the class-I aminoacyl-tRNA synthetase family.</text>
</comment>
<comment type="sequence caution" evidence="2">
    <conflict type="erroneous initiation">
        <sequence resource="EMBL-CDS" id="AAO05030"/>
    </conflict>
</comment>
<proteinExistence type="inferred from homology"/>
<feature type="chain" id="PRO_0000152088" description="Leucine--tRNA ligase">
    <location>
        <begin position="1"/>
        <end position="804"/>
    </location>
</feature>
<feature type="short sequence motif" description="'HIGH' region">
    <location>
        <begin position="40"/>
        <end position="51"/>
    </location>
</feature>
<feature type="short sequence motif" description="'KMSKS' region">
    <location>
        <begin position="576"/>
        <end position="580"/>
    </location>
</feature>
<feature type="binding site" evidence="1">
    <location>
        <position position="579"/>
    </location>
    <ligand>
        <name>ATP</name>
        <dbReference type="ChEBI" id="CHEBI:30616"/>
    </ligand>
</feature>
<accession>Q8CNU8</accession>
<reference key="1">
    <citation type="journal article" date="2003" name="Mol. Microbiol.">
        <title>Genome-based analysis of virulence genes in a non-biofilm-forming Staphylococcus epidermidis strain (ATCC 12228).</title>
        <authorList>
            <person name="Zhang Y.-Q."/>
            <person name="Ren S.-X."/>
            <person name="Li H.-L."/>
            <person name="Wang Y.-X."/>
            <person name="Fu G."/>
            <person name="Yang J."/>
            <person name="Qin Z.-Q."/>
            <person name="Miao Y.-G."/>
            <person name="Wang W.-Y."/>
            <person name="Chen R.-S."/>
            <person name="Shen Y."/>
            <person name="Chen Z."/>
            <person name="Yuan Z.-H."/>
            <person name="Zhao G.-P."/>
            <person name="Qu D."/>
            <person name="Danchin A."/>
            <person name="Wen Y.-M."/>
        </authorList>
    </citation>
    <scope>NUCLEOTIDE SEQUENCE [LARGE SCALE GENOMIC DNA]</scope>
    <source>
        <strain>ATCC 12228 / FDA PCI 1200</strain>
    </source>
</reference>
<sequence length="804" mass="92164">MNYNHKEIEKKWQNYWEENKTFKTNDNLGQKKFYALDMFPYPSGAGLHVGHPEGYTATDIISRYKRMQGYNVLHPMGWDAFGLPAEQYALDTGNDPREFTQKNIQTFKRQIQELGFSYDWDREVNTTDPEYYKWTQWIFIQLYNKGLAYVDEVAVNWCPALGTVLSNEEVVDGVSERGGHPVYRKPMKQWVLKITEYADRLLEDLDELDWPESIKDMQRNWIGRSEGAKVTFKIEQSDQNIEVFTTRPDTIYGTSFLVLSPEHPLVNEITTSDKEQEVKLYQNEASKKSDLERTDLAKEKTGVFTGTFAINPLSGDKLPIWIADYVLSTYGTGAVMAVPGHDERDHEFATKFNLPIIEVIEGGEVQKYAYTGEGKHINSGELDGLENEAAISKAIELLESKGAGEKKVNYKLRDWLFSRQRYWGEPIPIIHWEDGSMTTVPEDELPLLLPETDEIKPSGTGESPLANIDAFVNVIDEKTGMKGRRETNTMPQWAGSCWYYLRYIDPHNEKMIADPEKLKHWLPVDLYIGGVEHAVLHLLYARFWHKVLYDLGVVPTKEPFQKLYNQGMILGEGNEKMSKSKGNVINPDDIVASHGADTLRLYEMFMGPLDAAIAWSEKGLDGSRRFLDRVWRLIITDENSINKKIVDSNNHSLDKVYNQTVKKVTEDFDTLSFNTAISQLMVFINECYKTNEVYKPYIEGFVKMLSPIAPHIGEELWDRLGHENTITYQPWPTFDESLLVDDEVEIVVQVNGKVRAKINIPKDLSKEEMQDLALSNDNVKMSIEGKEVKKVIAVPQKLVNIVAK</sequence>
<dbReference type="EC" id="6.1.1.4" evidence="1"/>
<dbReference type="EMBL" id="AE015929">
    <property type="protein sequence ID" value="AAO05030.1"/>
    <property type="status" value="ALT_INIT"/>
    <property type="molecule type" value="Genomic_DNA"/>
</dbReference>
<dbReference type="RefSeq" id="NP_764986.1">
    <property type="nucleotide sequence ID" value="NC_004461.1"/>
</dbReference>
<dbReference type="SMR" id="Q8CNU8"/>
<dbReference type="KEGG" id="sep:SE_1431"/>
<dbReference type="PATRIC" id="fig|176280.10.peg.1397"/>
<dbReference type="eggNOG" id="COG0495">
    <property type="taxonomic scope" value="Bacteria"/>
</dbReference>
<dbReference type="HOGENOM" id="CLU_004427_0_0_9"/>
<dbReference type="OrthoDB" id="9810365at2"/>
<dbReference type="Proteomes" id="UP000001411">
    <property type="component" value="Chromosome"/>
</dbReference>
<dbReference type="GO" id="GO:0005829">
    <property type="term" value="C:cytosol"/>
    <property type="evidence" value="ECO:0007669"/>
    <property type="project" value="TreeGrafter"/>
</dbReference>
<dbReference type="GO" id="GO:0002161">
    <property type="term" value="F:aminoacyl-tRNA deacylase activity"/>
    <property type="evidence" value="ECO:0007669"/>
    <property type="project" value="InterPro"/>
</dbReference>
<dbReference type="GO" id="GO:0005524">
    <property type="term" value="F:ATP binding"/>
    <property type="evidence" value="ECO:0007669"/>
    <property type="project" value="UniProtKB-UniRule"/>
</dbReference>
<dbReference type="GO" id="GO:0004823">
    <property type="term" value="F:leucine-tRNA ligase activity"/>
    <property type="evidence" value="ECO:0007669"/>
    <property type="project" value="UniProtKB-UniRule"/>
</dbReference>
<dbReference type="GO" id="GO:0006429">
    <property type="term" value="P:leucyl-tRNA aminoacylation"/>
    <property type="evidence" value="ECO:0007669"/>
    <property type="project" value="UniProtKB-UniRule"/>
</dbReference>
<dbReference type="CDD" id="cd07958">
    <property type="entry name" value="Anticodon_Ia_Leu_BEm"/>
    <property type="match status" value="1"/>
</dbReference>
<dbReference type="CDD" id="cd00812">
    <property type="entry name" value="LeuRS_core"/>
    <property type="match status" value="1"/>
</dbReference>
<dbReference type="FunFam" id="1.10.730.10:FF:000012">
    <property type="entry name" value="Leucine--tRNA ligase"/>
    <property type="match status" value="1"/>
</dbReference>
<dbReference type="FunFam" id="3.10.20.590:FF:000001">
    <property type="entry name" value="Leucine--tRNA ligase"/>
    <property type="match status" value="1"/>
</dbReference>
<dbReference type="FunFam" id="3.40.50.620:FF:000056">
    <property type="entry name" value="Leucine--tRNA ligase"/>
    <property type="match status" value="1"/>
</dbReference>
<dbReference type="FunFam" id="3.40.50.620:FF:000077">
    <property type="entry name" value="Leucine--tRNA ligase"/>
    <property type="match status" value="1"/>
</dbReference>
<dbReference type="FunFam" id="1.10.730.10:FF:000011">
    <property type="entry name" value="Leucine--tRNA ligase chloroplastic/mitochondrial"/>
    <property type="match status" value="1"/>
</dbReference>
<dbReference type="Gene3D" id="3.10.20.590">
    <property type="match status" value="1"/>
</dbReference>
<dbReference type="Gene3D" id="3.40.50.620">
    <property type="entry name" value="HUPs"/>
    <property type="match status" value="2"/>
</dbReference>
<dbReference type="Gene3D" id="1.10.730.10">
    <property type="entry name" value="Isoleucyl-tRNA Synthetase, Domain 1"/>
    <property type="match status" value="1"/>
</dbReference>
<dbReference type="HAMAP" id="MF_00049_B">
    <property type="entry name" value="Leu_tRNA_synth_B"/>
    <property type="match status" value="1"/>
</dbReference>
<dbReference type="InterPro" id="IPR001412">
    <property type="entry name" value="aa-tRNA-synth_I_CS"/>
</dbReference>
<dbReference type="InterPro" id="IPR002300">
    <property type="entry name" value="aa-tRNA-synth_Ia"/>
</dbReference>
<dbReference type="InterPro" id="IPR002302">
    <property type="entry name" value="Leu-tRNA-ligase"/>
</dbReference>
<dbReference type="InterPro" id="IPR025709">
    <property type="entry name" value="Leu_tRNA-synth_edit"/>
</dbReference>
<dbReference type="InterPro" id="IPR013155">
    <property type="entry name" value="M/V/L/I-tRNA-synth_anticd-bd"/>
</dbReference>
<dbReference type="InterPro" id="IPR015413">
    <property type="entry name" value="Methionyl/Leucyl_tRNA_Synth"/>
</dbReference>
<dbReference type="InterPro" id="IPR014729">
    <property type="entry name" value="Rossmann-like_a/b/a_fold"/>
</dbReference>
<dbReference type="InterPro" id="IPR009080">
    <property type="entry name" value="tRNAsynth_Ia_anticodon-bd"/>
</dbReference>
<dbReference type="InterPro" id="IPR009008">
    <property type="entry name" value="Val/Leu/Ile-tRNA-synth_edit"/>
</dbReference>
<dbReference type="NCBIfam" id="TIGR00396">
    <property type="entry name" value="leuS_bact"/>
    <property type="match status" value="1"/>
</dbReference>
<dbReference type="PANTHER" id="PTHR43740:SF2">
    <property type="entry name" value="LEUCINE--TRNA LIGASE, MITOCHONDRIAL"/>
    <property type="match status" value="1"/>
</dbReference>
<dbReference type="PANTHER" id="PTHR43740">
    <property type="entry name" value="LEUCYL-TRNA SYNTHETASE"/>
    <property type="match status" value="1"/>
</dbReference>
<dbReference type="Pfam" id="PF08264">
    <property type="entry name" value="Anticodon_1"/>
    <property type="match status" value="1"/>
</dbReference>
<dbReference type="Pfam" id="PF00133">
    <property type="entry name" value="tRNA-synt_1"/>
    <property type="match status" value="1"/>
</dbReference>
<dbReference type="Pfam" id="PF13603">
    <property type="entry name" value="tRNA-synt_1_2"/>
    <property type="match status" value="1"/>
</dbReference>
<dbReference type="Pfam" id="PF09334">
    <property type="entry name" value="tRNA-synt_1g"/>
    <property type="match status" value="1"/>
</dbReference>
<dbReference type="PRINTS" id="PR00985">
    <property type="entry name" value="TRNASYNTHLEU"/>
</dbReference>
<dbReference type="SUPFAM" id="SSF47323">
    <property type="entry name" value="Anticodon-binding domain of a subclass of class I aminoacyl-tRNA synthetases"/>
    <property type="match status" value="1"/>
</dbReference>
<dbReference type="SUPFAM" id="SSF52374">
    <property type="entry name" value="Nucleotidylyl transferase"/>
    <property type="match status" value="1"/>
</dbReference>
<dbReference type="SUPFAM" id="SSF50677">
    <property type="entry name" value="ValRS/IleRS/LeuRS editing domain"/>
    <property type="match status" value="1"/>
</dbReference>
<dbReference type="PROSITE" id="PS00178">
    <property type="entry name" value="AA_TRNA_LIGASE_I"/>
    <property type="match status" value="1"/>
</dbReference>
<keyword id="KW-0030">Aminoacyl-tRNA synthetase</keyword>
<keyword id="KW-0067">ATP-binding</keyword>
<keyword id="KW-0963">Cytoplasm</keyword>
<keyword id="KW-0436">Ligase</keyword>
<keyword id="KW-0547">Nucleotide-binding</keyword>
<keyword id="KW-0648">Protein biosynthesis</keyword>
<organism>
    <name type="scientific">Staphylococcus epidermidis (strain ATCC 12228 / FDA PCI 1200)</name>
    <dbReference type="NCBI Taxonomy" id="176280"/>
    <lineage>
        <taxon>Bacteria</taxon>
        <taxon>Bacillati</taxon>
        <taxon>Bacillota</taxon>
        <taxon>Bacilli</taxon>
        <taxon>Bacillales</taxon>
        <taxon>Staphylococcaceae</taxon>
        <taxon>Staphylococcus</taxon>
    </lineage>
</organism>
<gene>
    <name evidence="1" type="primary">leuS</name>
    <name type="ordered locus">SE_1431</name>
</gene>
<protein>
    <recommendedName>
        <fullName evidence="1">Leucine--tRNA ligase</fullName>
        <ecNumber evidence="1">6.1.1.4</ecNumber>
    </recommendedName>
    <alternativeName>
        <fullName evidence="1">Leucyl-tRNA synthetase</fullName>
        <shortName evidence="1">LeuRS</shortName>
    </alternativeName>
</protein>